<organism>
    <name type="scientific">Mycoplasmopsis synoviae (strain 53)</name>
    <name type="common">Mycoplasma synoviae</name>
    <dbReference type="NCBI Taxonomy" id="262723"/>
    <lineage>
        <taxon>Bacteria</taxon>
        <taxon>Bacillati</taxon>
        <taxon>Mycoplasmatota</taxon>
        <taxon>Mycoplasmoidales</taxon>
        <taxon>Metamycoplasmataceae</taxon>
        <taxon>Mycoplasmopsis</taxon>
    </lineage>
</organism>
<gene>
    <name evidence="1" type="primary">rnpA</name>
    <name type="ordered locus">MS53_0600</name>
</gene>
<reference key="1">
    <citation type="journal article" date="2005" name="J. Bacteriol.">
        <title>Swine and poultry pathogens: the complete genome sequences of two strains of Mycoplasma hyopneumoniae and a strain of Mycoplasma synoviae.</title>
        <authorList>
            <person name="Vasconcelos A.T.R."/>
            <person name="Ferreira H.B."/>
            <person name="Bizarro C.V."/>
            <person name="Bonatto S.L."/>
            <person name="Carvalho M.O."/>
            <person name="Pinto P.M."/>
            <person name="Almeida D.F."/>
            <person name="Almeida L.G.P."/>
            <person name="Almeida R."/>
            <person name="Alves-Junior L."/>
            <person name="Assuncao E.N."/>
            <person name="Azevedo V.A.C."/>
            <person name="Bogo M.R."/>
            <person name="Brigido M.M."/>
            <person name="Brocchi M."/>
            <person name="Burity H.A."/>
            <person name="Camargo A.A."/>
            <person name="Camargo S.S."/>
            <person name="Carepo M.S."/>
            <person name="Carraro D.M."/>
            <person name="de Mattos Cascardo J.C."/>
            <person name="Castro L.A."/>
            <person name="Cavalcanti G."/>
            <person name="Chemale G."/>
            <person name="Collevatti R.G."/>
            <person name="Cunha C.W."/>
            <person name="Dallagiovanna B."/>
            <person name="Dambros B.P."/>
            <person name="Dellagostin O.A."/>
            <person name="Falcao C."/>
            <person name="Fantinatti-Garboggini F."/>
            <person name="Felipe M.S.S."/>
            <person name="Fiorentin L."/>
            <person name="Franco G.R."/>
            <person name="Freitas N.S.A."/>
            <person name="Frias D."/>
            <person name="Grangeiro T.B."/>
            <person name="Grisard E.C."/>
            <person name="Guimaraes C.T."/>
            <person name="Hungria M."/>
            <person name="Jardim S.N."/>
            <person name="Krieger M.A."/>
            <person name="Laurino J.P."/>
            <person name="Lima L.F.A."/>
            <person name="Lopes M.I."/>
            <person name="Loreto E.L.S."/>
            <person name="Madeira H.M.F."/>
            <person name="Manfio G.P."/>
            <person name="Maranhao A.Q."/>
            <person name="Martinkovics C.T."/>
            <person name="Medeiros S.R.B."/>
            <person name="Moreira M.A.M."/>
            <person name="Neiva M."/>
            <person name="Ramalho-Neto C.E."/>
            <person name="Nicolas M.F."/>
            <person name="Oliveira S.C."/>
            <person name="Paixao R.F.C."/>
            <person name="Pedrosa F.O."/>
            <person name="Pena S.D.J."/>
            <person name="Pereira M."/>
            <person name="Pereira-Ferrari L."/>
            <person name="Piffer I."/>
            <person name="Pinto L.S."/>
            <person name="Potrich D.P."/>
            <person name="Salim A.C.M."/>
            <person name="Santos F.R."/>
            <person name="Schmitt R."/>
            <person name="Schneider M.P.C."/>
            <person name="Schrank A."/>
            <person name="Schrank I.S."/>
            <person name="Schuck A.F."/>
            <person name="Seuanez H.N."/>
            <person name="Silva D.W."/>
            <person name="Silva R."/>
            <person name="Silva S.C."/>
            <person name="Soares C.M.A."/>
            <person name="Souza K.R.L."/>
            <person name="Souza R.C."/>
            <person name="Staats C.C."/>
            <person name="Steffens M.B.R."/>
            <person name="Teixeira S.M.R."/>
            <person name="Urmenyi T.P."/>
            <person name="Vainstein M.H."/>
            <person name="Zuccherato L.W."/>
            <person name="Simpson A.J.G."/>
            <person name="Zaha A."/>
        </authorList>
    </citation>
    <scope>NUCLEOTIDE SEQUENCE [LARGE SCALE GENOMIC DNA]</scope>
    <source>
        <strain>53</strain>
    </source>
</reference>
<protein>
    <recommendedName>
        <fullName evidence="1">Ribonuclease P protein component</fullName>
        <shortName evidence="1">RNase P protein</shortName>
        <shortName evidence="1">RNaseP protein</shortName>
        <ecNumber evidence="1">3.1.26.5</ecNumber>
    </recommendedName>
    <alternativeName>
        <fullName evidence="1">Protein C5</fullName>
    </alternativeName>
</protein>
<proteinExistence type="inferred from homology"/>
<sequence length="112" mass="13675">MKKQYRLRKNWEFDLVLKNKKFIANKYVIVYYKKASAFKVGITVPKKFANSVGRNYHKRQMKAIVHKMNLYNYPYEMVIIIRKNFINCNFLTKVIEIEKIFTQFKQQNEKIK</sequence>
<feature type="chain" id="PRO_1000021430" description="Ribonuclease P protein component">
    <location>
        <begin position="1"/>
        <end position="112"/>
    </location>
</feature>
<name>RNPA_MYCS5</name>
<accession>Q4A5G4</accession>
<evidence type="ECO:0000255" key="1">
    <source>
        <dbReference type="HAMAP-Rule" id="MF_00227"/>
    </source>
</evidence>
<dbReference type="EC" id="3.1.26.5" evidence="1"/>
<dbReference type="EMBL" id="AE017245">
    <property type="protein sequence ID" value="AAZ44007.1"/>
    <property type="molecule type" value="Genomic_DNA"/>
</dbReference>
<dbReference type="RefSeq" id="WP_011283736.1">
    <property type="nucleotide sequence ID" value="NC_007294.1"/>
</dbReference>
<dbReference type="SMR" id="Q4A5G4"/>
<dbReference type="STRING" id="262723.MS53_0600"/>
<dbReference type="KEGG" id="msy:MS53_0600"/>
<dbReference type="eggNOG" id="COG0594">
    <property type="taxonomic scope" value="Bacteria"/>
</dbReference>
<dbReference type="HOGENOM" id="CLU_117179_9_1_14"/>
<dbReference type="OrthoDB" id="9810867at2"/>
<dbReference type="BRENDA" id="3.1.26.5">
    <property type="organism ID" value="10311"/>
</dbReference>
<dbReference type="Proteomes" id="UP000000549">
    <property type="component" value="Chromosome"/>
</dbReference>
<dbReference type="GO" id="GO:0030677">
    <property type="term" value="C:ribonuclease P complex"/>
    <property type="evidence" value="ECO:0007669"/>
    <property type="project" value="TreeGrafter"/>
</dbReference>
<dbReference type="GO" id="GO:0042781">
    <property type="term" value="F:3'-tRNA processing endoribonuclease activity"/>
    <property type="evidence" value="ECO:0007669"/>
    <property type="project" value="TreeGrafter"/>
</dbReference>
<dbReference type="GO" id="GO:0004526">
    <property type="term" value="F:ribonuclease P activity"/>
    <property type="evidence" value="ECO:0007669"/>
    <property type="project" value="UniProtKB-UniRule"/>
</dbReference>
<dbReference type="GO" id="GO:0000049">
    <property type="term" value="F:tRNA binding"/>
    <property type="evidence" value="ECO:0007669"/>
    <property type="project" value="UniProtKB-UniRule"/>
</dbReference>
<dbReference type="GO" id="GO:0001682">
    <property type="term" value="P:tRNA 5'-leader removal"/>
    <property type="evidence" value="ECO:0007669"/>
    <property type="project" value="UniProtKB-UniRule"/>
</dbReference>
<dbReference type="Gene3D" id="3.30.230.10">
    <property type="match status" value="1"/>
</dbReference>
<dbReference type="HAMAP" id="MF_00227">
    <property type="entry name" value="RNase_P"/>
    <property type="match status" value="1"/>
</dbReference>
<dbReference type="InterPro" id="IPR020568">
    <property type="entry name" value="Ribosomal_Su5_D2-typ_SF"/>
</dbReference>
<dbReference type="InterPro" id="IPR014721">
    <property type="entry name" value="Ribsml_uS5_D2-typ_fold_subgr"/>
</dbReference>
<dbReference type="InterPro" id="IPR000100">
    <property type="entry name" value="RNase_P"/>
</dbReference>
<dbReference type="NCBIfam" id="TIGR00188">
    <property type="entry name" value="rnpA"/>
    <property type="match status" value="1"/>
</dbReference>
<dbReference type="PANTHER" id="PTHR33992">
    <property type="entry name" value="RIBONUCLEASE P PROTEIN COMPONENT"/>
    <property type="match status" value="1"/>
</dbReference>
<dbReference type="PANTHER" id="PTHR33992:SF1">
    <property type="entry name" value="RIBONUCLEASE P PROTEIN COMPONENT"/>
    <property type="match status" value="1"/>
</dbReference>
<dbReference type="Pfam" id="PF00825">
    <property type="entry name" value="Ribonuclease_P"/>
    <property type="match status" value="1"/>
</dbReference>
<dbReference type="SUPFAM" id="SSF54211">
    <property type="entry name" value="Ribosomal protein S5 domain 2-like"/>
    <property type="match status" value="1"/>
</dbReference>
<comment type="function">
    <text evidence="1">RNaseP catalyzes the removal of the 5'-leader sequence from pre-tRNA to produce the mature 5'-terminus. It can also cleave other RNA substrates such as 4.5S RNA. The protein component plays an auxiliary but essential role in vivo by binding to the 5'-leader sequence and broadening the substrate specificity of the ribozyme.</text>
</comment>
<comment type="catalytic activity">
    <reaction evidence="1">
        <text>Endonucleolytic cleavage of RNA, removing 5'-extranucleotides from tRNA precursor.</text>
        <dbReference type="EC" id="3.1.26.5"/>
    </reaction>
</comment>
<comment type="subunit">
    <text evidence="1">Consists of a catalytic RNA component (M1 or rnpB) and a protein subunit.</text>
</comment>
<comment type="similarity">
    <text evidence="1">Belongs to the RnpA family.</text>
</comment>
<keyword id="KW-0255">Endonuclease</keyword>
<keyword id="KW-0378">Hydrolase</keyword>
<keyword id="KW-0540">Nuclease</keyword>
<keyword id="KW-1185">Reference proteome</keyword>
<keyword id="KW-0694">RNA-binding</keyword>
<keyword id="KW-0819">tRNA processing</keyword>